<proteinExistence type="inferred from homology"/>
<organism>
    <name type="scientific">Salmonella newport (strain SL254)</name>
    <dbReference type="NCBI Taxonomy" id="423368"/>
    <lineage>
        <taxon>Bacteria</taxon>
        <taxon>Pseudomonadati</taxon>
        <taxon>Pseudomonadota</taxon>
        <taxon>Gammaproteobacteria</taxon>
        <taxon>Enterobacterales</taxon>
        <taxon>Enterobacteriaceae</taxon>
        <taxon>Salmonella</taxon>
    </lineage>
</organism>
<evidence type="ECO:0000255" key="1">
    <source>
        <dbReference type="HAMAP-Rule" id="MF_01205"/>
    </source>
</evidence>
<keyword id="KW-0378">Hydrolase</keyword>
<gene>
    <name evidence="1" type="primary">ymdB</name>
    <name type="ordered locus">SNSL254_A1243</name>
</gene>
<accession>B4T2X8</accession>
<protein>
    <recommendedName>
        <fullName evidence="1">O-acetyl-ADP-ribose deacetylase</fullName>
        <ecNumber evidence="1">3.1.1.106</ecNumber>
    </recommendedName>
    <alternativeName>
        <fullName evidence="1">Regulator of RNase III activity</fullName>
    </alternativeName>
</protein>
<reference key="1">
    <citation type="journal article" date="2011" name="J. Bacteriol.">
        <title>Comparative genomics of 28 Salmonella enterica isolates: evidence for CRISPR-mediated adaptive sublineage evolution.</title>
        <authorList>
            <person name="Fricke W.F."/>
            <person name="Mammel M.K."/>
            <person name="McDermott P.F."/>
            <person name="Tartera C."/>
            <person name="White D.G."/>
            <person name="Leclerc J.E."/>
            <person name="Ravel J."/>
            <person name="Cebula T.A."/>
        </authorList>
    </citation>
    <scope>NUCLEOTIDE SEQUENCE [LARGE SCALE GENOMIC DNA]</scope>
    <source>
        <strain>SL254</strain>
    </source>
</reference>
<comment type="function">
    <text evidence="1">Deacetylates O-acetyl-ADP ribose to yield ADP-ribose and free acetate. Down-regulates ribonuclease 3 (RNase III) activity. Acts by interacting directly with the region of the ribonuclease that is required for dimerization/activation.</text>
</comment>
<comment type="catalytic activity">
    <reaction evidence="1">
        <text>3''-O-acetyl-ADP-D-ribose + H2O = ADP-D-ribose + acetate + H(+)</text>
        <dbReference type="Rhea" id="RHEA:59244"/>
        <dbReference type="ChEBI" id="CHEBI:15377"/>
        <dbReference type="ChEBI" id="CHEBI:15378"/>
        <dbReference type="ChEBI" id="CHEBI:30089"/>
        <dbReference type="ChEBI" id="CHEBI:57967"/>
        <dbReference type="ChEBI" id="CHEBI:142723"/>
        <dbReference type="EC" id="3.1.1.106"/>
    </reaction>
</comment>
<comment type="catalytic activity">
    <reaction evidence="1">
        <text>2''-O-acetyl-ADP-D-ribose + H2O = ADP-D-ribose + acetate + H(+)</text>
        <dbReference type="Rhea" id="RHEA:57060"/>
        <dbReference type="ChEBI" id="CHEBI:15377"/>
        <dbReference type="ChEBI" id="CHEBI:15378"/>
        <dbReference type="ChEBI" id="CHEBI:30089"/>
        <dbReference type="ChEBI" id="CHEBI:57967"/>
        <dbReference type="ChEBI" id="CHEBI:83767"/>
        <dbReference type="EC" id="3.1.1.106"/>
    </reaction>
</comment>
<comment type="subunit">
    <text evidence="1">Homodimer. Interacts with RNase III.</text>
</comment>
<comment type="similarity">
    <text evidence="1">Belongs to the MacroD-type family. YmdB subfamily.</text>
</comment>
<sequence>MTSRLQVIQGDITQLSVDAIVNAANASLMGGGGVDGAIHRAAGPALLDACKLIRQQQGECQTGHAVITPAGKLSAKAVIHTVGPVWRGGEHQEAELLEEAYRNCLLLAEANHFRSIAFPAISTGVYGYPRAQAAEIAVRTVSDFITRYALPEQVYFVCYDEETARLYARLLTQQGDDPA</sequence>
<dbReference type="EC" id="3.1.1.106" evidence="1"/>
<dbReference type="EMBL" id="CP001113">
    <property type="protein sequence ID" value="ACF62068.1"/>
    <property type="molecule type" value="Genomic_DNA"/>
</dbReference>
<dbReference type="RefSeq" id="WP_000203941.1">
    <property type="nucleotide sequence ID" value="NZ_CCMR01000003.1"/>
</dbReference>
<dbReference type="SMR" id="B4T2X8"/>
<dbReference type="KEGG" id="see:SNSL254_A1243"/>
<dbReference type="HOGENOM" id="CLU_046550_5_1_6"/>
<dbReference type="Proteomes" id="UP000008824">
    <property type="component" value="Chromosome"/>
</dbReference>
<dbReference type="GO" id="GO:0061463">
    <property type="term" value="F:O-acetyl-ADP-ribose deacetylase activity"/>
    <property type="evidence" value="ECO:0007669"/>
    <property type="project" value="UniProtKB-EC"/>
</dbReference>
<dbReference type="GO" id="GO:0001883">
    <property type="term" value="F:purine nucleoside binding"/>
    <property type="evidence" value="ECO:0007669"/>
    <property type="project" value="UniProtKB-UniRule"/>
</dbReference>
<dbReference type="GO" id="GO:0008428">
    <property type="term" value="F:ribonuclease inhibitor activity"/>
    <property type="evidence" value="ECO:0007669"/>
    <property type="project" value="UniProtKB-UniRule"/>
</dbReference>
<dbReference type="GO" id="GO:0042278">
    <property type="term" value="P:purine nucleoside metabolic process"/>
    <property type="evidence" value="ECO:0007669"/>
    <property type="project" value="UniProtKB-UniRule"/>
</dbReference>
<dbReference type="CDD" id="cd02908">
    <property type="entry name" value="Macro_OAADPr_deacetylase"/>
    <property type="match status" value="1"/>
</dbReference>
<dbReference type="Gene3D" id="3.40.220.10">
    <property type="entry name" value="Leucine Aminopeptidase, subunit E, domain 1"/>
    <property type="match status" value="1"/>
</dbReference>
<dbReference type="HAMAP" id="MF_01205">
    <property type="entry name" value="YmdB"/>
    <property type="match status" value="1"/>
</dbReference>
<dbReference type="InterPro" id="IPR002589">
    <property type="entry name" value="Macro_dom"/>
</dbReference>
<dbReference type="InterPro" id="IPR043472">
    <property type="entry name" value="Macro_dom-like"/>
</dbReference>
<dbReference type="InterPro" id="IPR024900">
    <property type="entry name" value="O-Ac-ADP-ribose_deAcase"/>
</dbReference>
<dbReference type="NCBIfam" id="NF001660">
    <property type="entry name" value="PRK00431.1-1"/>
    <property type="match status" value="1"/>
</dbReference>
<dbReference type="NCBIfam" id="NF001664">
    <property type="entry name" value="PRK00431.1-6"/>
    <property type="match status" value="1"/>
</dbReference>
<dbReference type="PANTHER" id="PTHR11106">
    <property type="entry name" value="GANGLIOSIDE INDUCED DIFFERENTIATION ASSOCIATED PROTEIN 2-RELATED"/>
    <property type="match status" value="1"/>
</dbReference>
<dbReference type="PANTHER" id="PTHR11106:SF27">
    <property type="entry name" value="MACRO DOMAIN-CONTAINING PROTEIN"/>
    <property type="match status" value="1"/>
</dbReference>
<dbReference type="Pfam" id="PF01661">
    <property type="entry name" value="Macro"/>
    <property type="match status" value="1"/>
</dbReference>
<dbReference type="SMART" id="SM00506">
    <property type="entry name" value="A1pp"/>
    <property type="match status" value="1"/>
</dbReference>
<dbReference type="SUPFAM" id="SSF52949">
    <property type="entry name" value="Macro domain-like"/>
    <property type="match status" value="1"/>
</dbReference>
<dbReference type="PROSITE" id="PS51154">
    <property type="entry name" value="MACRO"/>
    <property type="match status" value="1"/>
</dbReference>
<name>YMDB_SALNS</name>
<feature type="chain" id="PRO_0000409485" description="O-acetyl-ADP-ribose deacetylase">
    <location>
        <begin position="1"/>
        <end position="179"/>
    </location>
</feature>
<feature type="domain" description="Macro" evidence="1">
    <location>
        <begin position="1"/>
        <end position="175"/>
    </location>
</feature>
<feature type="active site" description="Proton acceptor" evidence="1">
    <location>
        <position position="35"/>
    </location>
</feature>
<feature type="binding site" evidence="1">
    <location>
        <begin position="11"/>
        <end position="12"/>
    </location>
    <ligand>
        <name>substrate</name>
    </ligand>
</feature>
<feature type="binding site" evidence="1">
    <location>
        <position position="25"/>
    </location>
    <ligand>
        <name>substrate</name>
    </ligand>
</feature>
<feature type="binding site" evidence="1">
    <location>
        <begin position="33"/>
        <end position="35"/>
    </location>
    <ligand>
        <name>substrate</name>
    </ligand>
</feature>
<feature type="binding site" evidence="1">
    <location>
        <begin position="122"/>
        <end position="126"/>
    </location>
    <ligand>
        <name>substrate</name>
    </ligand>
</feature>